<evidence type="ECO:0000256" key="1">
    <source>
        <dbReference type="SAM" id="MobiDB-lite"/>
    </source>
</evidence>
<evidence type="ECO:0000269" key="2">
    <source ref="1"/>
</evidence>
<evidence type="ECO:0000305" key="3"/>
<dbReference type="EMBL" id="AJ224518">
    <property type="protein sequence ID" value="CAA12026.1"/>
    <property type="molecule type" value="mRNA"/>
</dbReference>
<dbReference type="RefSeq" id="NP_001266073.1">
    <property type="nucleotide sequence ID" value="NM_001279144.1"/>
</dbReference>
<dbReference type="SMR" id="O49816"/>
<dbReference type="PaxDb" id="3827-XP_004506897.1"/>
<dbReference type="GeneID" id="101503652"/>
<dbReference type="KEGG" id="cam:101503652"/>
<dbReference type="eggNOG" id="KOG4744">
    <property type="taxonomic scope" value="Eukaryota"/>
</dbReference>
<dbReference type="OrthoDB" id="2193576at2759"/>
<dbReference type="Proteomes" id="UP000087171">
    <property type="component" value="Chromosome Ca6"/>
</dbReference>
<dbReference type="Gene3D" id="1.20.120.20">
    <property type="entry name" value="Apolipoprotein"/>
    <property type="match status" value="1"/>
</dbReference>
<dbReference type="InterPro" id="IPR039624">
    <property type="entry name" value="LEA1/2/D7/KIN2"/>
</dbReference>
<dbReference type="PANTHER" id="PTHR34191">
    <property type="entry name" value="LATE EMBRYOGENESIS ABUNDANT PROTEIN (LEA) FAMILY PROTEIN"/>
    <property type="match status" value="1"/>
</dbReference>
<dbReference type="PANTHER" id="PTHR34191:SF20">
    <property type="entry name" value="LATE EMBRYOGENESIS ABUNDANT PROTEIN (LEA) FAMILY PROTEIN"/>
    <property type="match status" value="1"/>
</dbReference>
<name>LEA1_CICAR</name>
<sequence length="177" mass="19101">MASHDQSYKAGETMGRTEEKTNQMIGNIEDKAQAAKEKAQQAAQTAKDKTSQTAQAAKEKTQQTAQAAKEKTQQTAQAAKDETQQTAQAAKDKTQQTTEATKEKAQDTTGRAREKGSEMGQSTKETAQSGKDNSAGFLQQTGEKVKGMAQGATDAVKQTFGMANDDKDKDHFPTNRH</sequence>
<feature type="chain" id="PRO_0000221220" description="Late embryogenesis abundant protein 1">
    <location>
        <begin position="1"/>
        <end position="177"/>
    </location>
</feature>
<feature type="repeat" description="1">
    <location>
        <begin position="53"/>
        <end position="63"/>
    </location>
</feature>
<feature type="repeat" description="2">
    <location>
        <begin position="64"/>
        <end position="74"/>
    </location>
</feature>
<feature type="repeat" description="3">
    <location>
        <begin position="75"/>
        <end position="85"/>
    </location>
</feature>
<feature type="repeat" description="4">
    <location>
        <begin position="86"/>
        <end position="96"/>
    </location>
</feature>
<feature type="region of interest" description="Disordered" evidence="1">
    <location>
        <begin position="1"/>
        <end position="177"/>
    </location>
</feature>
<feature type="region of interest" description="4 X 11 AA approximate tandem repeats of T-A-Q-A-A-K-E-K-T-Q-Q">
    <location>
        <begin position="53"/>
        <end position="96"/>
    </location>
</feature>
<feature type="compositionally biased region" description="Basic and acidic residues" evidence="1">
    <location>
        <begin position="28"/>
        <end position="39"/>
    </location>
</feature>
<feature type="compositionally biased region" description="Low complexity" evidence="1">
    <location>
        <begin position="40"/>
        <end position="89"/>
    </location>
</feature>
<feature type="compositionally biased region" description="Basic and acidic residues" evidence="1">
    <location>
        <begin position="90"/>
        <end position="117"/>
    </location>
</feature>
<feature type="compositionally biased region" description="Polar residues" evidence="1">
    <location>
        <begin position="119"/>
        <end position="142"/>
    </location>
</feature>
<feature type="compositionally biased region" description="Basic and acidic residues" evidence="1">
    <location>
        <begin position="164"/>
        <end position="177"/>
    </location>
</feature>
<comment type="tissue specificity">
    <text evidence="2">Highest expression is found in seeds. No expression detected in adult tissues.</text>
</comment>
<comment type="developmental stage">
    <text evidence="2">Not expressed in the first stages of embryogenesis. Levels increase during late embryogenesis and decrease in germinating seedlings.</text>
</comment>
<comment type="induction">
    <text evidence="2">Up-regulated in response to water stress.</text>
</comment>
<comment type="similarity">
    <text evidence="3">Belongs to the LEA type 4 family.</text>
</comment>
<reference key="1">
    <citation type="journal article" date="2001" name="Plant Physiol. Biochem.">
        <title>Water stress-regulated gene expression in Cicer arietinum seedlings and plants.</title>
        <authorList>
            <person name="Romo S."/>
            <person name="Dopico B."/>
            <person name="Labrador E."/>
        </authorList>
    </citation>
    <scope>NUCLEOTIDE SEQUENCE [MRNA]</scope>
    <scope>TISSUE SPECIFICITY</scope>
    <scope>DEVELOPMENTAL STAGE</scope>
    <scope>INDUCTION</scope>
    <source>
        <strain>cv. Castellana</strain>
        <tissue>Epicotyl</tissue>
    </source>
</reference>
<proteinExistence type="evidence at transcript level"/>
<keyword id="KW-1185">Reference proteome</keyword>
<keyword id="KW-0677">Repeat</keyword>
<protein>
    <recommendedName>
        <fullName>Late embryogenesis abundant protein 1</fullName>
    </recommendedName>
    <alternativeName>
        <fullName>CapLEA-1</fullName>
    </alternativeName>
</protein>
<accession>O49816</accession>
<organism>
    <name type="scientific">Cicer arietinum</name>
    <name type="common">Chickpea</name>
    <name type="synonym">Garbanzo</name>
    <dbReference type="NCBI Taxonomy" id="3827"/>
    <lineage>
        <taxon>Eukaryota</taxon>
        <taxon>Viridiplantae</taxon>
        <taxon>Streptophyta</taxon>
        <taxon>Embryophyta</taxon>
        <taxon>Tracheophyta</taxon>
        <taxon>Spermatophyta</taxon>
        <taxon>Magnoliopsida</taxon>
        <taxon>eudicotyledons</taxon>
        <taxon>Gunneridae</taxon>
        <taxon>Pentapetalae</taxon>
        <taxon>rosids</taxon>
        <taxon>fabids</taxon>
        <taxon>Fabales</taxon>
        <taxon>Fabaceae</taxon>
        <taxon>Papilionoideae</taxon>
        <taxon>50 kb inversion clade</taxon>
        <taxon>NPAAA clade</taxon>
        <taxon>Hologalegina</taxon>
        <taxon>IRL clade</taxon>
        <taxon>Cicereae</taxon>
        <taxon>Cicer</taxon>
    </lineage>
</organism>